<evidence type="ECO:0000250" key="1"/>
<evidence type="ECO:0000305" key="2"/>
<sequence length="406" mass="43589">MGVFQKGEDQKGESANMKPIPLLSSYDMGKFNLSHRVVLAPLTRSRSYDNLPQSHAMEYYSQRATKGGLLIAEATGVSSDAQGMSVIPHTPGIWTKEQVEAWKPIVDAVHAKGGIFFCQIWHVGRASDMEERPISSTDKPIEKTEENYFLGFSTPRSLTVEEIPDVIKHFTLAAKNALEAGFDGVEVHAANGFLLDQFMKDGVNARADEYGGGVAGRCRFALEVVDAVAAEAGAGRTGVRLSPYSRCLDCADSDPDALAAHMARELGSRGVLYCNVVEPEMVATPAEGGSGGETMRIPHRLRAVREAFAGTLMVGGGYDREEGNWAVAGGYADLVVYGRLFLANPDLPRRFRLGAPLNGYDRATFYTADPVAGYTDYPFLDDDGDDGLAASAASASSNKSGDQDGV</sequence>
<comment type="function">
    <text evidence="1">Putative oxophytodienoate reductase that may be involved in the biosynthesis or metabolism of oxylipin signaling molecules.</text>
</comment>
<comment type="cofactor">
    <cofactor>
        <name>FMN</name>
        <dbReference type="ChEBI" id="CHEBI:58210"/>
    </cofactor>
</comment>
<comment type="similarity">
    <text evidence="2">Belongs to the NADH:flavin oxidoreductase/NADH oxidase family.</text>
</comment>
<comment type="sequence caution" evidence="2">
    <conflict type="erroneous gene model prediction">
        <sequence resource="EMBL-CDS" id="EEE61066"/>
    </conflict>
</comment>
<accession>B9FFD2</accession>
<protein>
    <recommendedName>
        <fullName>Putative 12-oxophytodienoate reductase 12</fullName>
        <ecNumber>1.3.1.-</ecNumber>
    </recommendedName>
    <alternativeName>
        <fullName>OPDA-reductase 12</fullName>
        <shortName>OsOPR12</shortName>
    </alternativeName>
</protein>
<organism>
    <name type="scientific">Oryza sativa subsp. japonica</name>
    <name type="common">Rice</name>
    <dbReference type="NCBI Taxonomy" id="39947"/>
    <lineage>
        <taxon>Eukaryota</taxon>
        <taxon>Viridiplantae</taxon>
        <taxon>Streptophyta</taxon>
        <taxon>Embryophyta</taxon>
        <taxon>Tracheophyta</taxon>
        <taxon>Spermatophyta</taxon>
        <taxon>Magnoliopsida</taxon>
        <taxon>Liliopsida</taxon>
        <taxon>Poales</taxon>
        <taxon>Poaceae</taxon>
        <taxon>BOP clade</taxon>
        <taxon>Oryzoideae</taxon>
        <taxon>Oryzeae</taxon>
        <taxon>Oryzinae</taxon>
        <taxon>Oryza</taxon>
        <taxon>Oryza sativa</taxon>
    </lineage>
</organism>
<reference key="1">
    <citation type="journal article" date="2005" name="Nature">
        <title>The map-based sequence of the rice genome.</title>
        <authorList>
            <consortium name="International rice genome sequencing project (IRGSP)"/>
        </authorList>
    </citation>
    <scope>NUCLEOTIDE SEQUENCE [LARGE SCALE GENOMIC DNA]</scope>
    <source>
        <strain>cv. Nipponbare</strain>
    </source>
</reference>
<reference key="2">
    <citation type="journal article" date="2008" name="Nucleic Acids Res.">
        <title>The rice annotation project database (RAP-DB): 2008 update.</title>
        <authorList>
            <consortium name="The rice annotation project (RAP)"/>
        </authorList>
    </citation>
    <scope>GENOME REANNOTATION</scope>
    <source>
        <strain>cv. Nipponbare</strain>
    </source>
</reference>
<reference key="3">
    <citation type="journal article" date="2013" name="Rice">
        <title>Improvement of the Oryza sativa Nipponbare reference genome using next generation sequence and optical map data.</title>
        <authorList>
            <person name="Kawahara Y."/>
            <person name="de la Bastide M."/>
            <person name="Hamilton J.P."/>
            <person name="Kanamori H."/>
            <person name="McCombie W.R."/>
            <person name="Ouyang S."/>
            <person name="Schwartz D.C."/>
            <person name="Tanaka T."/>
            <person name="Wu J."/>
            <person name="Zhou S."/>
            <person name="Childs K.L."/>
            <person name="Davidson R.M."/>
            <person name="Lin H."/>
            <person name="Quesada-Ocampo L."/>
            <person name="Vaillancourt B."/>
            <person name="Sakai H."/>
            <person name="Lee S.S."/>
            <person name="Kim J."/>
            <person name="Numa H."/>
            <person name="Itoh T."/>
            <person name="Buell C.R."/>
            <person name="Matsumoto T."/>
        </authorList>
    </citation>
    <scope>GENOME REANNOTATION</scope>
    <source>
        <strain>cv. Nipponbare</strain>
    </source>
</reference>
<reference key="4">
    <citation type="journal article" date="2005" name="PLoS Biol.">
        <title>The genomes of Oryza sativa: a history of duplications.</title>
        <authorList>
            <person name="Yu J."/>
            <person name="Wang J."/>
            <person name="Lin W."/>
            <person name="Li S."/>
            <person name="Li H."/>
            <person name="Zhou J."/>
            <person name="Ni P."/>
            <person name="Dong W."/>
            <person name="Hu S."/>
            <person name="Zeng C."/>
            <person name="Zhang J."/>
            <person name="Zhang Y."/>
            <person name="Li R."/>
            <person name="Xu Z."/>
            <person name="Li S."/>
            <person name="Li X."/>
            <person name="Zheng H."/>
            <person name="Cong L."/>
            <person name="Lin L."/>
            <person name="Yin J."/>
            <person name="Geng J."/>
            <person name="Li G."/>
            <person name="Shi J."/>
            <person name="Liu J."/>
            <person name="Lv H."/>
            <person name="Li J."/>
            <person name="Wang J."/>
            <person name="Deng Y."/>
            <person name="Ran L."/>
            <person name="Shi X."/>
            <person name="Wang X."/>
            <person name="Wu Q."/>
            <person name="Li C."/>
            <person name="Ren X."/>
            <person name="Wang J."/>
            <person name="Wang X."/>
            <person name="Li D."/>
            <person name="Liu D."/>
            <person name="Zhang X."/>
            <person name="Ji Z."/>
            <person name="Zhao W."/>
            <person name="Sun Y."/>
            <person name="Zhang Z."/>
            <person name="Bao J."/>
            <person name="Han Y."/>
            <person name="Dong L."/>
            <person name="Ji J."/>
            <person name="Chen P."/>
            <person name="Wu S."/>
            <person name="Liu J."/>
            <person name="Xiao Y."/>
            <person name="Bu D."/>
            <person name="Tan J."/>
            <person name="Yang L."/>
            <person name="Ye C."/>
            <person name="Zhang J."/>
            <person name="Xu J."/>
            <person name="Zhou Y."/>
            <person name="Yu Y."/>
            <person name="Zhang B."/>
            <person name="Zhuang S."/>
            <person name="Wei H."/>
            <person name="Liu B."/>
            <person name="Lei M."/>
            <person name="Yu H."/>
            <person name="Li Y."/>
            <person name="Xu H."/>
            <person name="Wei S."/>
            <person name="He X."/>
            <person name="Fang L."/>
            <person name="Zhang Z."/>
            <person name="Zhang Y."/>
            <person name="Huang X."/>
            <person name="Su Z."/>
            <person name="Tong W."/>
            <person name="Li J."/>
            <person name="Tong Z."/>
            <person name="Li S."/>
            <person name="Ye J."/>
            <person name="Wang L."/>
            <person name="Fang L."/>
            <person name="Lei T."/>
            <person name="Chen C.-S."/>
            <person name="Chen H.-C."/>
            <person name="Xu Z."/>
            <person name="Li H."/>
            <person name="Huang H."/>
            <person name="Zhang F."/>
            <person name="Xu H."/>
            <person name="Li N."/>
            <person name="Zhao C."/>
            <person name="Li S."/>
            <person name="Dong L."/>
            <person name="Huang Y."/>
            <person name="Li L."/>
            <person name="Xi Y."/>
            <person name="Qi Q."/>
            <person name="Li W."/>
            <person name="Zhang B."/>
            <person name="Hu W."/>
            <person name="Zhang Y."/>
            <person name="Tian X."/>
            <person name="Jiao Y."/>
            <person name="Liang X."/>
            <person name="Jin J."/>
            <person name="Gao L."/>
            <person name="Zheng W."/>
            <person name="Hao B."/>
            <person name="Liu S.-M."/>
            <person name="Wang W."/>
            <person name="Yuan L."/>
            <person name="Cao M."/>
            <person name="McDermott J."/>
            <person name="Samudrala R."/>
            <person name="Wang J."/>
            <person name="Wong G.K.-S."/>
            <person name="Yang H."/>
        </authorList>
    </citation>
    <scope>NUCLEOTIDE SEQUENCE [LARGE SCALE GENOMIC DNA]</scope>
    <source>
        <strain>cv. Nipponbare</strain>
    </source>
</reference>
<reference key="5">
    <citation type="journal article" date="2003" name="Science">
        <title>Collection, mapping, and annotation of over 28,000 cDNA clones from japonica rice.</title>
        <authorList>
            <consortium name="The rice full-length cDNA consortium"/>
        </authorList>
    </citation>
    <scope>NUCLEOTIDE SEQUENCE [LARGE SCALE MRNA]</scope>
    <source>
        <strain>cv. Nipponbare</strain>
    </source>
</reference>
<keyword id="KW-0275">Fatty acid biosynthesis</keyword>
<keyword id="KW-0276">Fatty acid metabolism</keyword>
<keyword id="KW-0285">Flavoprotein</keyword>
<keyword id="KW-0288">FMN</keyword>
<keyword id="KW-0444">Lipid biosynthesis</keyword>
<keyword id="KW-0443">Lipid metabolism</keyword>
<keyword id="KW-0521">NADP</keyword>
<keyword id="KW-0560">Oxidoreductase</keyword>
<keyword id="KW-0925">Oxylipin biosynthesis</keyword>
<keyword id="KW-1185">Reference proteome</keyword>
<dbReference type="EC" id="1.3.1.-"/>
<dbReference type="EMBL" id="AP008210">
    <property type="status" value="NOT_ANNOTATED_CDS"/>
    <property type="molecule type" value="Genomic_DNA"/>
</dbReference>
<dbReference type="EMBL" id="AP014960">
    <property type="status" value="NOT_ANNOTATED_CDS"/>
    <property type="molecule type" value="Genomic_DNA"/>
</dbReference>
<dbReference type="EMBL" id="CM000141">
    <property type="protein sequence ID" value="EEE61066.1"/>
    <property type="status" value="ALT_SEQ"/>
    <property type="molecule type" value="Genomic_DNA"/>
</dbReference>
<dbReference type="EMBL" id="AK106409">
    <property type="status" value="NOT_ANNOTATED_CDS"/>
    <property type="molecule type" value="mRNA"/>
</dbReference>
<dbReference type="SMR" id="B9FFD2"/>
<dbReference type="FunCoup" id="B9FFD2">
    <property type="interactions" value="149"/>
</dbReference>
<dbReference type="STRING" id="39947.B9FFD2"/>
<dbReference type="PaxDb" id="39947-B9FFD2"/>
<dbReference type="eggNOG" id="KOG0134">
    <property type="taxonomic scope" value="Eukaryota"/>
</dbReference>
<dbReference type="InParanoid" id="B9FFD2"/>
<dbReference type="Proteomes" id="UP000000763">
    <property type="component" value="Chromosome 4"/>
</dbReference>
<dbReference type="Proteomes" id="UP000007752">
    <property type="component" value="Chromosome 4"/>
</dbReference>
<dbReference type="Proteomes" id="UP000059680">
    <property type="component" value="Chromosome 4"/>
</dbReference>
<dbReference type="GO" id="GO:0010181">
    <property type="term" value="F:FMN binding"/>
    <property type="evidence" value="ECO:0007669"/>
    <property type="project" value="InterPro"/>
</dbReference>
<dbReference type="GO" id="GO:0016491">
    <property type="term" value="F:oxidoreductase activity"/>
    <property type="evidence" value="ECO:0000318"/>
    <property type="project" value="GO_Central"/>
</dbReference>
<dbReference type="GO" id="GO:0006633">
    <property type="term" value="P:fatty acid biosynthetic process"/>
    <property type="evidence" value="ECO:0007669"/>
    <property type="project" value="UniProtKB-KW"/>
</dbReference>
<dbReference type="GO" id="GO:0031408">
    <property type="term" value="P:oxylipin biosynthetic process"/>
    <property type="evidence" value="ECO:0007669"/>
    <property type="project" value="UniProtKB-KW"/>
</dbReference>
<dbReference type="CDD" id="cd02933">
    <property type="entry name" value="OYE_like_FMN"/>
    <property type="match status" value="1"/>
</dbReference>
<dbReference type="FunFam" id="3.20.20.70:FF:000073">
    <property type="entry name" value="12-oxophytodienoate reductase 3"/>
    <property type="match status" value="1"/>
</dbReference>
<dbReference type="Gene3D" id="3.20.20.70">
    <property type="entry name" value="Aldolase class I"/>
    <property type="match status" value="1"/>
</dbReference>
<dbReference type="InterPro" id="IPR013785">
    <property type="entry name" value="Aldolase_TIM"/>
</dbReference>
<dbReference type="InterPro" id="IPR001155">
    <property type="entry name" value="OxRdtase_FMN_N"/>
</dbReference>
<dbReference type="InterPro" id="IPR045247">
    <property type="entry name" value="Oye-like"/>
</dbReference>
<dbReference type="PANTHER" id="PTHR22893:SF113">
    <property type="entry name" value="12-OXOPHYTODIENOATE REDUCTASE 13-RELATED"/>
    <property type="match status" value="1"/>
</dbReference>
<dbReference type="PANTHER" id="PTHR22893">
    <property type="entry name" value="NADH OXIDOREDUCTASE-RELATED"/>
    <property type="match status" value="1"/>
</dbReference>
<dbReference type="Pfam" id="PF00724">
    <property type="entry name" value="Oxidored_FMN"/>
    <property type="match status" value="1"/>
</dbReference>
<dbReference type="SUPFAM" id="SSF51395">
    <property type="entry name" value="FMN-linked oxidoreductases"/>
    <property type="match status" value="1"/>
</dbReference>
<proteinExistence type="evidence at transcript level"/>
<feature type="chain" id="PRO_0000410718" description="Putative 12-oxophytodienoate reductase 12">
    <location>
        <begin position="1"/>
        <end position="406"/>
    </location>
</feature>
<feature type="binding site" evidence="1">
    <location>
        <begin position="41"/>
        <end position="43"/>
    </location>
    <ligand>
        <name>FMN</name>
        <dbReference type="ChEBI" id="CHEBI:58210"/>
    </ligand>
</feature>
<feature type="binding site" evidence="1">
    <location>
        <position position="74"/>
    </location>
    <ligand>
        <name>FMN</name>
        <dbReference type="ChEBI" id="CHEBI:58210"/>
    </ligand>
</feature>
<feature type="binding site" evidence="1">
    <location>
        <position position="119"/>
    </location>
    <ligand>
        <name>FMN</name>
        <dbReference type="ChEBI" id="CHEBI:58210"/>
    </ligand>
</feature>
<feature type="binding site" evidence="1">
    <location>
        <begin position="188"/>
        <end position="191"/>
    </location>
    <ligand>
        <name>substrate</name>
    </ligand>
</feature>
<feature type="binding site" evidence="1">
    <location>
        <position position="240"/>
    </location>
    <ligand>
        <name>FMN</name>
        <dbReference type="ChEBI" id="CHEBI:58210"/>
    </ligand>
</feature>
<feature type="binding site" evidence="1">
    <location>
        <position position="317"/>
    </location>
    <ligand>
        <name>FMN</name>
        <dbReference type="ChEBI" id="CHEBI:58210"/>
    </ligand>
</feature>
<feature type="binding site" evidence="1">
    <location>
        <begin position="338"/>
        <end position="339"/>
    </location>
    <ligand>
        <name>FMN</name>
        <dbReference type="ChEBI" id="CHEBI:58210"/>
    </ligand>
</feature>
<gene>
    <name type="primary">OPR12</name>
    <name type="synonym">OPR5</name>
    <name type="ordered locus">Os04g0443750</name>
    <name type="ORF">OsJ_14924</name>
</gene>
<name>OPR12_ORYSJ</name>